<reference key="1">
    <citation type="journal article" date="2011" name="Stand. Genomic Sci.">
        <title>Complete genome sequence of the filamentous gliding predatory bacterium Herpetosiphon aurantiacus type strain (114-95(T)).</title>
        <authorList>
            <person name="Kiss H."/>
            <person name="Nett M."/>
            <person name="Domin N."/>
            <person name="Martin K."/>
            <person name="Maresca J.A."/>
            <person name="Copeland A."/>
            <person name="Lapidus A."/>
            <person name="Lucas S."/>
            <person name="Berry K.W."/>
            <person name="Glavina Del Rio T."/>
            <person name="Dalin E."/>
            <person name="Tice H."/>
            <person name="Pitluck S."/>
            <person name="Richardson P."/>
            <person name="Bruce D."/>
            <person name="Goodwin L."/>
            <person name="Han C."/>
            <person name="Detter J.C."/>
            <person name="Schmutz J."/>
            <person name="Brettin T."/>
            <person name="Land M."/>
            <person name="Hauser L."/>
            <person name="Kyrpides N.C."/>
            <person name="Ivanova N."/>
            <person name="Goeker M."/>
            <person name="Woyke T."/>
            <person name="Klenk H.P."/>
            <person name="Bryant D.A."/>
        </authorList>
    </citation>
    <scope>NUCLEOTIDE SEQUENCE [LARGE SCALE GENOMIC DNA]</scope>
    <source>
        <strain>ATCC 23779 / DSM 785 / 114-95</strain>
    </source>
</reference>
<name>HRCA_HERA2</name>
<comment type="function">
    <text evidence="1">Negative regulator of class I heat shock genes (grpE-dnaK-dnaJ and groELS operons). Prevents heat-shock induction of these operons.</text>
</comment>
<comment type="similarity">
    <text evidence="1">Belongs to the HrcA family.</text>
</comment>
<feature type="chain" id="PRO_1000092812" description="Heat-inducible transcription repressor HrcA">
    <location>
        <begin position="1"/>
        <end position="354"/>
    </location>
</feature>
<gene>
    <name evidence="1" type="primary">hrcA</name>
    <name type="ordered locus">Haur_0438</name>
</gene>
<evidence type="ECO:0000255" key="1">
    <source>
        <dbReference type="HAMAP-Rule" id="MF_00081"/>
    </source>
</evidence>
<proteinExistence type="inferred from homology"/>
<protein>
    <recommendedName>
        <fullName evidence="1">Heat-inducible transcription repressor HrcA</fullName>
    </recommendedName>
</protein>
<accession>A9AUH0</accession>
<organism>
    <name type="scientific">Herpetosiphon aurantiacus (strain ATCC 23779 / DSM 785 / 114-95)</name>
    <dbReference type="NCBI Taxonomy" id="316274"/>
    <lineage>
        <taxon>Bacteria</taxon>
        <taxon>Bacillati</taxon>
        <taxon>Chloroflexota</taxon>
        <taxon>Chloroflexia</taxon>
        <taxon>Herpetosiphonales</taxon>
        <taxon>Herpetosiphonaceae</taxon>
        <taxon>Herpetosiphon</taxon>
    </lineage>
</organism>
<sequence length="354" mass="39218">MHLELNERRRRVLKAVIQQYIDTATPVASQDLARSLGVSSATVRNEMAALEDAGLLTHLHTSAGRLPTDAGYRFFVENLMDRAALSTQEQRMIQHQFYQIRSELNQWIHLAAAVLARTAQTAAVVTPPRAYESRFKHIELISINDALVLLVLVLHEGSVKQQTLPADPNTTQEQLSRIAGRINELCHEASAKAIANIAHNQSTNQPPLSSFEVLVIESVARAMQQFEEHVNELIHHDGLLEMLHQPEFGQVTRVREVLSILEGGTMLESLIPQALASDGVQVIIGGEHSRDELRDYSVILSRYGVNGDVAGVVGVLGPRRMAYPRSISSVRYIAGVMSDLMGDLYGERKIEPSE</sequence>
<dbReference type="EMBL" id="CP000875">
    <property type="protein sequence ID" value="ABX03089.1"/>
    <property type="molecule type" value="Genomic_DNA"/>
</dbReference>
<dbReference type="SMR" id="A9AUH0"/>
<dbReference type="FunCoup" id="A9AUH0">
    <property type="interactions" value="198"/>
</dbReference>
<dbReference type="STRING" id="316274.Haur_0438"/>
<dbReference type="KEGG" id="hau:Haur_0438"/>
<dbReference type="eggNOG" id="COG1420">
    <property type="taxonomic scope" value="Bacteria"/>
</dbReference>
<dbReference type="HOGENOM" id="CLU_050019_0_0_0"/>
<dbReference type="InParanoid" id="A9AUH0"/>
<dbReference type="Proteomes" id="UP000000787">
    <property type="component" value="Chromosome"/>
</dbReference>
<dbReference type="GO" id="GO:0003677">
    <property type="term" value="F:DNA binding"/>
    <property type="evidence" value="ECO:0007669"/>
    <property type="project" value="InterPro"/>
</dbReference>
<dbReference type="GO" id="GO:0045892">
    <property type="term" value="P:negative regulation of DNA-templated transcription"/>
    <property type="evidence" value="ECO:0007669"/>
    <property type="project" value="UniProtKB-UniRule"/>
</dbReference>
<dbReference type="Gene3D" id="3.30.450.40">
    <property type="match status" value="1"/>
</dbReference>
<dbReference type="Gene3D" id="3.30.390.60">
    <property type="entry name" value="Heat-inducible transcription repressor hrca homolog, domain 3"/>
    <property type="match status" value="1"/>
</dbReference>
<dbReference type="Gene3D" id="1.10.10.10">
    <property type="entry name" value="Winged helix-like DNA-binding domain superfamily/Winged helix DNA-binding domain"/>
    <property type="match status" value="1"/>
</dbReference>
<dbReference type="HAMAP" id="MF_00081">
    <property type="entry name" value="HrcA"/>
    <property type="match status" value="1"/>
</dbReference>
<dbReference type="InterPro" id="IPR029016">
    <property type="entry name" value="GAF-like_dom_sf"/>
</dbReference>
<dbReference type="InterPro" id="IPR002571">
    <property type="entry name" value="HrcA"/>
</dbReference>
<dbReference type="InterPro" id="IPR021153">
    <property type="entry name" value="HrcA_C"/>
</dbReference>
<dbReference type="InterPro" id="IPR013196">
    <property type="entry name" value="HTH_11"/>
</dbReference>
<dbReference type="InterPro" id="IPR036388">
    <property type="entry name" value="WH-like_DNA-bd_sf"/>
</dbReference>
<dbReference type="InterPro" id="IPR036390">
    <property type="entry name" value="WH_DNA-bd_sf"/>
</dbReference>
<dbReference type="InterPro" id="IPR023120">
    <property type="entry name" value="WHTH_transcript_rep_HrcA_IDD"/>
</dbReference>
<dbReference type="NCBIfam" id="TIGR00331">
    <property type="entry name" value="hrcA"/>
    <property type="match status" value="1"/>
</dbReference>
<dbReference type="PANTHER" id="PTHR34824">
    <property type="entry name" value="HEAT-INDUCIBLE TRANSCRIPTION REPRESSOR HRCA"/>
    <property type="match status" value="1"/>
</dbReference>
<dbReference type="PANTHER" id="PTHR34824:SF1">
    <property type="entry name" value="HEAT-INDUCIBLE TRANSCRIPTION REPRESSOR HRCA"/>
    <property type="match status" value="1"/>
</dbReference>
<dbReference type="Pfam" id="PF01628">
    <property type="entry name" value="HrcA"/>
    <property type="match status" value="1"/>
</dbReference>
<dbReference type="Pfam" id="PF08279">
    <property type="entry name" value="HTH_11"/>
    <property type="match status" value="1"/>
</dbReference>
<dbReference type="PIRSF" id="PIRSF005485">
    <property type="entry name" value="HrcA"/>
    <property type="match status" value="1"/>
</dbReference>
<dbReference type="SUPFAM" id="SSF55781">
    <property type="entry name" value="GAF domain-like"/>
    <property type="match status" value="1"/>
</dbReference>
<dbReference type="SUPFAM" id="SSF46785">
    <property type="entry name" value="Winged helix' DNA-binding domain"/>
    <property type="match status" value="1"/>
</dbReference>
<keyword id="KW-0678">Repressor</keyword>
<keyword id="KW-0346">Stress response</keyword>
<keyword id="KW-0804">Transcription</keyword>
<keyword id="KW-0805">Transcription regulation</keyword>